<reference key="1">
    <citation type="submission" date="2007-02" db="EMBL/GenBank/DDBJ databases">
        <title>Complete sequence of Pyrobaculum calidifontis JCM 11548.</title>
        <authorList>
            <consortium name="US DOE Joint Genome Institute"/>
            <person name="Copeland A."/>
            <person name="Lucas S."/>
            <person name="Lapidus A."/>
            <person name="Barry K."/>
            <person name="Glavina del Rio T."/>
            <person name="Dalin E."/>
            <person name="Tice H."/>
            <person name="Pitluck S."/>
            <person name="Chain P."/>
            <person name="Malfatti S."/>
            <person name="Shin M."/>
            <person name="Vergez L."/>
            <person name="Schmutz J."/>
            <person name="Larimer F."/>
            <person name="Land M."/>
            <person name="Hauser L."/>
            <person name="Kyrpides N."/>
            <person name="Mikhailova N."/>
            <person name="Cozen A.E."/>
            <person name="Fitz-Gibbon S.T."/>
            <person name="House C.H."/>
            <person name="Saltikov C."/>
            <person name="Lowe T.M."/>
            <person name="Richardson P."/>
        </authorList>
    </citation>
    <scope>NUCLEOTIDE SEQUENCE [LARGE SCALE GENOMIC DNA]</scope>
    <source>
        <strain>DSM 21063 / JCM 11548 / VA1</strain>
    </source>
</reference>
<sequence length="161" mass="17046">MLIRGRAIVYGDKIDTDVIIPAKYLVYTDPAILGQHAMEPIDPEFPKKAKGAILVAGRAFGMGSSREQAAIALKGAGVLAVVAESFARIFYRNAINVGLPVLQAPGVRAKVREGDELEVDLTGGVVRNLTTGEAIQGKPLAGLPLEILKAGGLLQYLKNRA</sequence>
<protein>
    <recommendedName>
        <fullName evidence="1">3-isopropylmalate dehydratase small subunit</fullName>
        <ecNumber evidence="1">4.2.1.33</ecNumber>
    </recommendedName>
    <alternativeName>
        <fullName evidence="1">Alpha-IPM isomerase</fullName>
        <shortName evidence="1">IPMI</shortName>
    </alternativeName>
    <alternativeName>
        <fullName evidence="1">Isopropylmalate isomerase</fullName>
    </alternativeName>
</protein>
<comment type="function">
    <text evidence="1">Catalyzes the isomerization between 2-isopropylmalate and 3-isopropylmalate, via the formation of 2-isopropylmaleate.</text>
</comment>
<comment type="catalytic activity">
    <reaction evidence="1">
        <text>(2R,3S)-3-isopropylmalate = (2S)-2-isopropylmalate</text>
        <dbReference type="Rhea" id="RHEA:32287"/>
        <dbReference type="ChEBI" id="CHEBI:1178"/>
        <dbReference type="ChEBI" id="CHEBI:35121"/>
        <dbReference type="EC" id="4.2.1.33"/>
    </reaction>
</comment>
<comment type="pathway">
    <text evidence="1">Amino-acid biosynthesis; L-leucine biosynthesis; L-leucine from 3-methyl-2-oxobutanoate: step 2/4.</text>
</comment>
<comment type="subunit">
    <text evidence="1">Heterodimer of LeuC and LeuD.</text>
</comment>
<comment type="similarity">
    <text evidence="1">Belongs to the LeuD family. LeuD type 2 subfamily.</text>
</comment>
<proteinExistence type="inferred from homology"/>
<feature type="chain" id="PRO_1000072970" description="3-isopropylmalate dehydratase small subunit">
    <location>
        <begin position="1"/>
        <end position="161"/>
    </location>
</feature>
<dbReference type="EC" id="4.2.1.33" evidence="1"/>
<dbReference type="EMBL" id="CP000561">
    <property type="protein sequence ID" value="ABO09020.1"/>
    <property type="molecule type" value="Genomic_DNA"/>
</dbReference>
<dbReference type="RefSeq" id="WP_011850278.1">
    <property type="nucleotide sequence ID" value="NC_009073.1"/>
</dbReference>
<dbReference type="SMR" id="A3MWK3"/>
<dbReference type="STRING" id="410359.Pcal_1603"/>
<dbReference type="GeneID" id="4910013"/>
<dbReference type="KEGG" id="pcl:Pcal_1603"/>
<dbReference type="eggNOG" id="arCOG02230">
    <property type="taxonomic scope" value="Archaea"/>
</dbReference>
<dbReference type="HOGENOM" id="CLU_081378_1_1_2"/>
<dbReference type="OrthoDB" id="6505at2157"/>
<dbReference type="UniPathway" id="UPA00048">
    <property type="reaction ID" value="UER00071"/>
</dbReference>
<dbReference type="Proteomes" id="UP000001431">
    <property type="component" value="Chromosome"/>
</dbReference>
<dbReference type="GO" id="GO:0003861">
    <property type="term" value="F:3-isopropylmalate dehydratase activity"/>
    <property type="evidence" value="ECO:0007669"/>
    <property type="project" value="UniProtKB-UniRule"/>
</dbReference>
<dbReference type="GO" id="GO:0009098">
    <property type="term" value="P:L-leucine biosynthetic process"/>
    <property type="evidence" value="ECO:0007669"/>
    <property type="project" value="UniProtKB-UniRule"/>
</dbReference>
<dbReference type="CDD" id="cd01577">
    <property type="entry name" value="IPMI_Swivel"/>
    <property type="match status" value="1"/>
</dbReference>
<dbReference type="Gene3D" id="3.20.19.10">
    <property type="entry name" value="Aconitase, domain 4"/>
    <property type="match status" value="1"/>
</dbReference>
<dbReference type="HAMAP" id="MF_01032">
    <property type="entry name" value="LeuD_type2"/>
    <property type="match status" value="1"/>
</dbReference>
<dbReference type="InterPro" id="IPR015928">
    <property type="entry name" value="Aconitase/3IPM_dehydase_swvl"/>
</dbReference>
<dbReference type="InterPro" id="IPR000573">
    <property type="entry name" value="AconitaseA/IPMdHydase_ssu_swvl"/>
</dbReference>
<dbReference type="InterPro" id="IPR033940">
    <property type="entry name" value="IPMI_Swivel"/>
</dbReference>
<dbReference type="InterPro" id="IPR050075">
    <property type="entry name" value="LeuD"/>
</dbReference>
<dbReference type="InterPro" id="IPR011827">
    <property type="entry name" value="LeuD_type2/HacB/DmdB"/>
</dbReference>
<dbReference type="NCBIfam" id="TIGR02087">
    <property type="entry name" value="LEUD_arch"/>
    <property type="match status" value="1"/>
</dbReference>
<dbReference type="PANTHER" id="PTHR43345:SF2">
    <property type="entry name" value="3-ISOPROPYLMALATE DEHYDRATASE SMALL SUBUNIT 1"/>
    <property type="match status" value="1"/>
</dbReference>
<dbReference type="PANTHER" id="PTHR43345">
    <property type="entry name" value="3-ISOPROPYLMALATE DEHYDRATASE SMALL SUBUNIT 2-RELATED-RELATED"/>
    <property type="match status" value="1"/>
</dbReference>
<dbReference type="Pfam" id="PF00694">
    <property type="entry name" value="Aconitase_C"/>
    <property type="match status" value="1"/>
</dbReference>
<dbReference type="SUPFAM" id="SSF52016">
    <property type="entry name" value="LeuD/IlvD-like"/>
    <property type="match status" value="1"/>
</dbReference>
<organism>
    <name type="scientific">Pyrobaculum calidifontis (strain DSM 21063 / JCM 11548 / VA1)</name>
    <dbReference type="NCBI Taxonomy" id="410359"/>
    <lineage>
        <taxon>Archaea</taxon>
        <taxon>Thermoproteota</taxon>
        <taxon>Thermoprotei</taxon>
        <taxon>Thermoproteales</taxon>
        <taxon>Thermoproteaceae</taxon>
        <taxon>Pyrobaculum</taxon>
    </lineage>
</organism>
<evidence type="ECO:0000255" key="1">
    <source>
        <dbReference type="HAMAP-Rule" id="MF_01032"/>
    </source>
</evidence>
<gene>
    <name evidence="1" type="primary">leuD</name>
    <name type="ordered locus">Pcal_1603</name>
</gene>
<keyword id="KW-0028">Amino-acid biosynthesis</keyword>
<keyword id="KW-0100">Branched-chain amino acid biosynthesis</keyword>
<keyword id="KW-0432">Leucine biosynthesis</keyword>
<keyword id="KW-0456">Lyase</keyword>
<name>LEUD_PYRCJ</name>
<accession>A3MWK3</accession>